<evidence type="ECO:0000250" key="1"/>
<evidence type="ECO:0000269" key="2">
    <source>
    </source>
</evidence>
<evidence type="ECO:0000305" key="3"/>
<comment type="function">
    <text evidence="2">Involved in the N-glucosylation of cytokinins. Catalyzes the formation of both the 7-N and the 9-N-glucosides.</text>
</comment>
<comment type="activity regulation">
    <text>Inhibited by olomoucine and 3-isobutyl-1-methylxanthine.</text>
</comment>
<comment type="biophysicochemical properties">
    <kinetics>
        <KM evidence="2">0.24 mM for trans-zeatin (at 30 degrees Celsius and pH 7.0)</KM>
        <KM evidence="2">0.16 mM for dihydrozeatin (at 30 degrees Celsius and pH 7.0)</KM>
        <KM evidence="2">0.13 mM for N6-isopentenyladenine (at 30 degrees Celsius and pH 7.0)</KM>
        <KM evidence="2">0.09 mM for N6-benzyladenine (at 30 degrees Celsius and pH 7.0)</KM>
        <KM evidence="2">0.21 mM for kinetin (at 30 degrees Celsius and pH 7.0)</KM>
        <Vmax evidence="2">4.06 nmol/sec/mg enzyme with trans-zeatin as substrate</Vmax>
        <Vmax evidence="2">6.34 nmol/sec/mg enzyme with dihydrozeatin as substrate</Vmax>
        <Vmax evidence="2">18.67 nmol/sec/mg enzyme with N6-isopentenyladenine as substrate</Vmax>
        <Vmax evidence="2">15.93 nmol/sec/mg enzyme with N6-benzyladenine as substrate</Vmax>
        <Vmax evidence="2">9.4 nmol/sec/mg enzyme with kinetin as substrate</Vmax>
    </kinetics>
    <phDependence>
        <text evidence="2">Optimum pH is 7.0.</text>
    </phDependence>
</comment>
<comment type="similarity">
    <text evidence="3">Belongs to the UDP-glycosyltransferase family.</text>
</comment>
<proteinExistence type="evidence at protein level"/>
<reference key="1">
    <citation type="journal article" date="1999" name="DNA Res.">
        <title>Structural analysis of Arabidopsis thaliana chromosome 5. IX. Sequence features of the regions of 1,011,550 bp covered by seventeen P1 and TAC clones.</title>
        <authorList>
            <person name="Kaneko T."/>
            <person name="Katoh T."/>
            <person name="Sato S."/>
            <person name="Nakamura Y."/>
            <person name="Asamizu E."/>
            <person name="Kotani H."/>
            <person name="Miyajima N."/>
            <person name="Tabata S."/>
        </authorList>
    </citation>
    <scope>NUCLEOTIDE SEQUENCE [LARGE SCALE GENOMIC DNA]</scope>
    <source>
        <strain>cv. Columbia</strain>
    </source>
</reference>
<reference key="2">
    <citation type="journal article" date="2017" name="Plant J.">
        <title>Araport11: a complete reannotation of the Arabidopsis thaliana reference genome.</title>
        <authorList>
            <person name="Cheng C.Y."/>
            <person name="Krishnakumar V."/>
            <person name="Chan A.P."/>
            <person name="Thibaud-Nissen F."/>
            <person name="Schobel S."/>
            <person name="Town C.D."/>
        </authorList>
    </citation>
    <scope>GENOME REANNOTATION</scope>
    <source>
        <strain>cv. Columbia</strain>
    </source>
</reference>
<reference key="3">
    <citation type="journal article" date="2003" name="Science">
        <title>Empirical analysis of transcriptional activity in the Arabidopsis genome.</title>
        <authorList>
            <person name="Yamada K."/>
            <person name="Lim J."/>
            <person name="Dale J.M."/>
            <person name="Chen H."/>
            <person name="Shinn P."/>
            <person name="Palm C.J."/>
            <person name="Southwick A.M."/>
            <person name="Wu H.C."/>
            <person name="Kim C.J."/>
            <person name="Nguyen M."/>
            <person name="Pham P.K."/>
            <person name="Cheuk R.F."/>
            <person name="Karlin-Newmann G."/>
            <person name="Liu S.X."/>
            <person name="Lam B."/>
            <person name="Sakano H."/>
            <person name="Wu T."/>
            <person name="Yu G."/>
            <person name="Miranda M."/>
            <person name="Quach H.L."/>
            <person name="Tripp M."/>
            <person name="Chang C.H."/>
            <person name="Lee J.M."/>
            <person name="Toriumi M.J."/>
            <person name="Chan M.M."/>
            <person name="Tang C.C."/>
            <person name="Onodera C.S."/>
            <person name="Deng J.M."/>
            <person name="Akiyama K."/>
            <person name="Ansari Y."/>
            <person name="Arakawa T."/>
            <person name="Banh J."/>
            <person name="Banno F."/>
            <person name="Bowser L."/>
            <person name="Brooks S.Y."/>
            <person name="Carninci P."/>
            <person name="Chao Q."/>
            <person name="Choy N."/>
            <person name="Enju A."/>
            <person name="Goldsmith A.D."/>
            <person name="Gurjal M."/>
            <person name="Hansen N.F."/>
            <person name="Hayashizaki Y."/>
            <person name="Johnson-Hopson C."/>
            <person name="Hsuan V.W."/>
            <person name="Iida K."/>
            <person name="Karnes M."/>
            <person name="Khan S."/>
            <person name="Koesema E."/>
            <person name="Ishida J."/>
            <person name="Jiang P.X."/>
            <person name="Jones T."/>
            <person name="Kawai J."/>
            <person name="Kamiya A."/>
            <person name="Meyers C."/>
            <person name="Nakajima M."/>
            <person name="Narusaka M."/>
            <person name="Seki M."/>
            <person name="Sakurai T."/>
            <person name="Satou M."/>
            <person name="Tamse R."/>
            <person name="Vaysberg M."/>
            <person name="Wallender E.K."/>
            <person name="Wong C."/>
            <person name="Yamamura Y."/>
            <person name="Yuan S."/>
            <person name="Shinozaki K."/>
            <person name="Davis R.W."/>
            <person name="Theologis A."/>
            <person name="Ecker J.R."/>
        </authorList>
    </citation>
    <scope>NUCLEOTIDE SEQUENCE [LARGE SCALE MRNA]</scope>
    <source>
        <strain>cv. Columbia</strain>
    </source>
</reference>
<reference key="4">
    <citation type="submission" date="2006-07" db="EMBL/GenBank/DDBJ databases">
        <title>Large-scale analysis of RIKEN Arabidopsis full-length (RAFL) cDNAs.</title>
        <authorList>
            <person name="Totoki Y."/>
            <person name="Seki M."/>
            <person name="Ishida J."/>
            <person name="Nakajima M."/>
            <person name="Enju A."/>
            <person name="Kamiya A."/>
            <person name="Narusaka M."/>
            <person name="Shin-i T."/>
            <person name="Nakagawa M."/>
            <person name="Sakamoto N."/>
            <person name="Oishi K."/>
            <person name="Kohara Y."/>
            <person name="Kobayashi M."/>
            <person name="Toyoda A."/>
            <person name="Sakaki Y."/>
            <person name="Sakurai T."/>
            <person name="Iida K."/>
            <person name="Akiyama K."/>
            <person name="Satou M."/>
            <person name="Toyoda T."/>
            <person name="Konagaya A."/>
            <person name="Carninci P."/>
            <person name="Kawai J."/>
            <person name="Hayashizaki Y."/>
            <person name="Shinozaki K."/>
        </authorList>
    </citation>
    <scope>NUCLEOTIDE SEQUENCE [LARGE SCALE MRNA]</scope>
    <source>
        <strain>cv. Columbia</strain>
    </source>
</reference>
<reference key="5">
    <citation type="journal article" date="2001" name="J. Biol. Chem.">
        <title>Phylogenetic analysis of the UDP-glycosyltransferase multigene family of Arabidopsis thaliana.</title>
        <authorList>
            <person name="Li Y."/>
            <person name="Baldauf S."/>
            <person name="Lim E.K."/>
            <person name="Bowles D.J."/>
        </authorList>
    </citation>
    <scope>GENE FAMILY</scope>
</reference>
<reference key="6">
    <citation type="journal article" date="2004" name="J. Biol. Chem.">
        <title>N-glucosylation of cytokinins by glycosyltransferases of Arabidopsis thaliana.</title>
        <authorList>
            <person name="Hou B."/>
            <person name="Lim E.-K."/>
            <person name="Higgins G.S."/>
            <person name="Bowles D.J."/>
        </authorList>
    </citation>
    <scope>FUNCTION</scope>
    <scope>BIOPHYSICOCHEMICAL PROPERTIES</scope>
</reference>
<name>U76C1_ARATH</name>
<sequence>MEKRNERQVILFPLPLQGCINPMLQLAKILYSRGFSITIIHTRFNAPKSSDHPLFTFLQIRDGLSESQTQSRDLLLQLTLLNNNCQIPFRECLAKLIKPSSDSGTEDRKISCVIDDSGWVFTQSVAESFNLPRFVLCAYKFSFFLGHFLVPQIRREGFLPVPDSEADDLVPEFPPLRKKDLSRIMGTSAQSKPLDAYLLKILDATKPASGIIVMSCKELDHDSLAESNKVFSIPIFPIGPFHIHDVPASSSSLLEPDQSCIPWLDMRETRSVVYVSLGSIASLNESDFLEIACGLRNTNQSFLWVVRPGSVHGRDWIESLPSGFMESLDGKGKIVRWAPQLDVLAHRATGGFLTHNGWNSTLESICEGVPMICLPCKWDQFVNARFISEVWRVGIHLEGRIERREIERAVIRLMVESKGEEIRGRIKVLRDEVRRSVKQGGSSYRSLDELVDRISIIIEPLVPT</sequence>
<keyword id="KW-0328">Glycosyltransferase</keyword>
<keyword id="KW-1185">Reference proteome</keyword>
<keyword id="KW-0808">Transferase</keyword>
<organism>
    <name type="scientific">Arabidopsis thaliana</name>
    <name type="common">Mouse-ear cress</name>
    <dbReference type="NCBI Taxonomy" id="3702"/>
    <lineage>
        <taxon>Eukaryota</taxon>
        <taxon>Viridiplantae</taxon>
        <taxon>Streptophyta</taxon>
        <taxon>Embryophyta</taxon>
        <taxon>Tracheophyta</taxon>
        <taxon>Spermatophyta</taxon>
        <taxon>Magnoliopsida</taxon>
        <taxon>eudicotyledons</taxon>
        <taxon>Gunneridae</taxon>
        <taxon>Pentapetalae</taxon>
        <taxon>rosids</taxon>
        <taxon>malvids</taxon>
        <taxon>Brassicales</taxon>
        <taxon>Brassicaceae</taxon>
        <taxon>Camelineae</taxon>
        <taxon>Arabidopsis</taxon>
    </lineage>
</organism>
<protein>
    <recommendedName>
        <fullName>UDP-glycosyltransferase 76C1</fullName>
        <ecNumber>2.4.1.-</ecNumber>
    </recommendedName>
    <alternativeName>
        <fullName>Cytokinin-N-glucosyltransferase 1</fullName>
    </alternativeName>
</protein>
<gene>
    <name type="primary">UGT76C1</name>
    <name type="ordered locus">At5g05870</name>
    <name type="ORF">K18J17.2</name>
</gene>
<dbReference type="EC" id="2.4.1.-"/>
<dbReference type="EMBL" id="AB017060">
    <property type="protein sequence ID" value="BAB10792.1"/>
    <property type="molecule type" value="Genomic_DNA"/>
</dbReference>
<dbReference type="EMBL" id="CP002688">
    <property type="protein sequence ID" value="AED90934.1"/>
    <property type="molecule type" value="Genomic_DNA"/>
</dbReference>
<dbReference type="EMBL" id="BT006473">
    <property type="protein sequence ID" value="AAP21281.1"/>
    <property type="molecule type" value="mRNA"/>
</dbReference>
<dbReference type="EMBL" id="AK228311">
    <property type="protein sequence ID" value="BAF00254.1"/>
    <property type="molecule type" value="mRNA"/>
</dbReference>
<dbReference type="RefSeq" id="NP_196206.1">
    <property type="nucleotide sequence ID" value="NM_120669.4"/>
</dbReference>
<dbReference type="SMR" id="Q9FI99"/>
<dbReference type="FunCoup" id="Q9FI99">
    <property type="interactions" value="191"/>
</dbReference>
<dbReference type="STRING" id="3702.Q9FI99"/>
<dbReference type="CAZy" id="GT1">
    <property type="family name" value="Glycosyltransferase Family 1"/>
</dbReference>
<dbReference type="PaxDb" id="3702-AT5G05870.1"/>
<dbReference type="ProteomicsDB" id="228647"/>
<dbReference type="EnsemblPlants" id="AT5G05870.1">
    <property type="protein sequence ID" value="AT5G05870.1"/>
    <property type="gene ID" value="AT5G05870"/>
</dbReference>
<dbReference type="GeneID" id="830472"/>
<dbReference type="Gramene" id="AT5G05870.1">
    <property type="protein sequence ID" value="AT5G05870.1"/>
    <property type="gene ID" value="AT5G05870"/>
</dbReference>
<dbReference type="KEGG" id="ath:AT5G05870"/>
<dbReference type="Araport" id="AT5G05870"/>
<dbReference type="TAIR" id="AT5G05870">
    <property type="gene designation" value="UGT76C1"/>
</dbReference>
<dbReference type="eggNOG" id="KOG1192">
    <property type="taxonomic scope" value="Eukaryota"/>
</dbReference>
<dbReference type="HOGENOM" id="CLU_001724_0_0_1"/>
<dbReference type="InParanoid" id="Q9FI99"/>
<dbReference type="OMA" id="HDKAYLP"/>
<dbReference type="PhylomeDB" id="Q9FI99"/>
<dbReference type="BioCyc" id="MetaCyc:AT5G05870-MONOMER"/>
<dbReference type="BRENDA" id="2.4.1.118">
    <property type="organism ID" value="399"/>
</dbReference>
<dbReference type="BRENDA" id="2.4.1.203">
    <property type="organism ID" value="399"/>
</dbReference>
<dbReference type="SABIO-RK" id="Q9FI99"/>
<dbReference type="PRO" id="PR:Q9FI99"/>
<dbReference type="Proteomes" id="UP000006548">
    <property type="component" value="Chromosome 5"/>
</dbReference>
<dbReference type="ExpressionAtlas" id="Q9FI99">
    <property type="expression patterns" value="baseline and differential"/>
</dbReference>
<dbReference type="GO" id="GO:0047807">
    <property type="term" value="F:cytokinin 7-beta-glucosyltransferase activity"/>
    <property type="evidence" value="ECO:0000314"/>
    <property type="project" value="TAIR"/>
</dbReference>
<dbReference type="GO" id="GO:0080062">
    <property type="term" value="F:cytokinin 9-beta-glucosyltransferase activity"/>
    <property type="evidence" value="ECO:0000314"/>
    <property type="project" value="TAIR"/>
</dbReference>
<dbReference type="CDD" id="cd03784">
    <property type="entry name" value="GT1_Gtf-like"/>
    <property type="match status" value="1"/>
</dbReference>
<dbReference type="FunFam" id="3.40.50.2000:FF:000040">
    <property type="entry name" value="UDP-glycosyltransferase 76C1"/>
    <property type="match status" value="1"/>
</dbReference>
<dbReference type="FunFam" id="3.40.50.2000:FF:000120">
    <property type="entry name" value="UDP-glycosyltransferase 76C1"/>
    <property type="match status" value="1"/>
</dbReference>
<dbReference type="Gene3D" id="3.40.50.2000">
    <property type="entry name" value="Glycogen Phosphorylase B"/>
    <property type="match status" value="2"/>
</dbReference>
<dbReference type="InterPro" id="IPR002213">
    <property type="entry name" value="UDP_glucos_trans"/>
</dbReference>
<dbReference type="PANTHER" id="PTHR11926">
    <property type="entry name" value="GLUCOSYL/GLUCURONOSYL TRANSFERASES"/>
    <property type="match status" value="1"/>
</dbReference>
<dbReference type="PANTHER" id="PTHR11926:SF1420">
    <property type="entry name" value="UDP-GLYCOSYLTRANSFERASE 76C1"/>
    <property type="match status" value="1"/>
</dbReference>
<dbReference type="Pfam" id="PF00201">
    <property type="entry name" value="UDPGT"/>
    <property type="match status" value="1"/>
</dbReference>
<dbReference type="SUPFAM" id="SSF53756">
    <property type="entry name" value="UDP-Glycosyltransferase/glycogen phosphorylase"/>
    <property type="match status" value="1"/>
</dbReference>
<feature type="chain" id="PRO_0000074153" description="UDP-glycosyltransferase 76C1">
    <location>
        <begin position="1"/>
        <end position="464"/>
    </location>
</feature>
<feature type="binding site" evidence="1">
    <location>
        <position position="279"/>
    </location>
    <ligand>
        <name>UDP-alpha-D-glucose</name>
        <dbReference type="ChEBI" id="CHEBI:58885"/>
    </ligand>
</feature>
<feature type="binding site" evidence="1">
    <location>
        <begin position="338"/>
        <end position="340"/>
    </location>
    <ligand>
        <name>UDP-alpha-D-glucose</name>
        <dbReference type="ChEBI" id="CHEBI:58885"/>
    </ligand>
</feature>
<feature type="binding site" evidence="1">
    <location>
        <begin position="355"/>
        <end position="363"/>
    </location>
    <ligand>
        <name>UDP-alpha-D-glucose</name>
        <dbReference type="ChEBI" id="CHEBI:58885"/>
    </ligand>
</feature>
<feature type="binding site" evidence="1">
    <location>
        <begin position="377"/>
        <end position="380"/>
    </location>
    <ligand>
        <name>UDP-alpha-D-glucose</name>
        <dbReference type="ChEBI" id="CHEBI:58885"/>
    </ligand>
</feature>
<accession>Q9FI99</accession>
<accession>Q0WRJ5</accession>